<dbReference type="EMBL" id="CP000941">
    <property type="protein sequence ID" value="ACA11518.1"/>
    <property type="molecule type" value="Genomic_DNA"/>
</dbReference>
<dbReference type="RefSeq" id="WP_004086537.1">
    <property type="nucleotide sequence ID" value="NC_010513.1"/>
</dbReference>
<dbReference type="SMR" id="B0U5L4"/>
<dbReference type="KEGG" id="xfm:Xfasm12_0509"/>
<dbReference type="HOGENOM" id="CLU_065464_1_2_6"/>
<dbReference type="GO" id="GO:0022625">
    <property type="term" value="C:cytosolic large ribosomal subunit"/>
    <property type="evidence" value="ECO:0007669"/>
    <property type="project" value="TreeGrafter"/>
</dbReference>
<dbReference type="GO" id="GO:0019843">
    <property type="term" value="F:rRNA binding"/>
    <property type="evidence" value="ECO:0007669"/>
    <property type="project" value="UniProtKB-UniRule"/>
</dbReference>
<dbReference type="GO" id="GO:0003735">
    <property type="term" value="F:structural constituent of ribosome"/>
    <property type="evidence" value="ECO:0007669"/>
    <property type="project" value="InterPro"/>
</dbReference>
<dbReference type="GO" id="GO:0002181">
    <property type="term" value="P:cytoplasmic translation"/>
    <property type="evidence" value="ECO:0007669"/>
    <property type="project" value="TreeGrafter"/>
</dbReference>
<dbReference type="FunFam" id="3.90.930.12:FF:000001">
    <property type="entry name" value="50S ribosomal protein L6"/>
    <property type="match status" value="1"/>
</dbReference>
<dbReference type="Gene3D" id="3.90.930.12">
    <property type="entry name" value="Ribosomal protein L6, alpha-beta domain"/>
    <property type="match status" value="2"/>
</dbReference>
<dbReference type="HAMAP" id="MF_01365_B">
    <property type="entry name" value="Ribosomal_uL6_B"/>
    <property type="match status" value="1"/>
</dbReference>
<dbReference type="InterPro" id="IPR000702">
    <property type="entry name" value="Ribosomal_uL6-like"/>
</dbReference>
<dbReference type="InterPro" id="IPR036789">
    <property type="entry name" value="Ribosomal_uL6-like_a/b-dom_sf"/>
</dbReference>
<dbReference type="InterPro" id="IPR020040">
    <property type="entry name" value="Ribosomal_uL6_a/b-dom"/>
</dbReference>
<dbReference type="InterPro" id="IPR019906">
    <property type="entry name" value="Ribosomal_uL6_bac-type"/>
</dbReference>
<dbReference type="InterPro" id="IPR002358">
    <property type="entry name" value="Ribosomal_uL6_CS"/>
</dbReference>
<dbReference type="NCBIfam" id="TIGR03654">
    <property type="entry name" value="L6_bact"/>
    <property type="match status" value="1"/>
</dbReference>
<dbReference type="PANTHER" id="PTHR11655">
    <property type="entry name" value="60S/50S RIBOSOMAL PROTEIN L6/L9"/>
    <property type="match status" value="1"/>
</dbReference>
<dbReference type="PANTHER" id="PTHR11655:SF14">
    <property type="entry name" value="LARGE RIBOSOMAL SUBUNIT PROTEIN UL6M"/>
    <property type="match status" value="1"/>
</dbReference>
<dbReference type="Pfam" id="PF00347">
    <property type="entry name" value="Ribosomal_L6"/>
    <property type="match status" value="2"/>
</dbReference>
<dbReference type="PIRSF" id="PIRSF002162">
    <property type="entry name" value="Ribosomal_L6"/>
    <property type="match status" value="1"/>
</dbReference>
<dbReference type="PRINTS" id="PR00059">
    <property type="entry name" value="RIBOSOMALL6"/>
</dbReference>
<dbReference type="SUPFAM" id="SSF56053">
    <property type="entry name" value="Ribosomal protein L6"/>
    <property type="match status" value="2"/>
</dbReference>
<dbReference type="PROSITE" id="PS00525">
    <property type="entry name" value="RIBOSOMAL_L6_1"/>
    <property type="match status" value="1"/>
</dbReference>
<evidence type="ECO:0000255" key="1">
    <source>
        <dbReference type="HAMAP-Rule" id="MF_01365"/>
    </source>
</evidence>
<evidence type="ECO:0000305" key="2"/>
<comment type="function">
    <text evidence="1">This protein binds to the 23S rRNA, and is important in its secondary structure. It is located near the subunit interface in the base of the L7/L12 stalk, and near the tRNA binding site of the peptidyltransferase center.</text>
</comment>
<comment type="subunit">
    <text evidence="1">Part of the 50S ribosomal subunit.</text>
</comment>
<comment type="similarity">
    <text evidence="1">Belongs to the universal ribosomal protein uL6 family.</text>
</comment>
<organism>
    <name type="scientific">Xylella fastidiosa (strain M12)</name>
    <dbReference type="NCBI Taxonomy" id="405440"/>
    <lineage>
        <taxon>Bacteria</taxon>
        <taxon>Pseudomonadati</taxon>
        <taxon>Pseudomonadota</taxon>
        <taxon>Gammaproteobacteria</taxon>
        <taxon>Lysobacterales</taxon>
        <taxon>Lysobacteraceae</taxon>
        <taxon>Xylella</taxon>
    </lineage>
</organism>
<protein>
    <recommendedName>
        <fullName evidence="1">Large ribosomal subunit protein uL6</fullName>
    </recommendedName>
    <alternativeName>
        <fullName evidence="2">50S ribosomal protein L6</fullName>
    </alternativeName>
</protein>
<gene>
    <name evidence="1" type="primary">rplF</name>
    <name type="ordered locus">Xfasm12_0509</name>
</gene>
<feature type="chain" id="PRO_1000144071" description="Large ribosomal subunit protein uL6">
    <location>
        <begin position="1"/>
        <end position="175"/>
    </location>
</feature>
<sequence length="175" mass="18780">MSRVAKKPISIPKGVEVSVQSDMLTVKGVKGVLTFPKSDNVNVVMDGDILTLSANDPSHISLAGTVRAILSNMIKGVSIGFERKLELVGVGYRASMQGKDLNLTLGFSHPLVFVPPEGITLLTPSQTEVVVQGIDKQRVGEVAAKIRSFRPPEPYKGKGLKYAAEAIIRKEAKKA</sequence>
<proteinExistence type="inferred from homology"/>
<keyword id="KW-0687">Ribonucleoprotein</keyword>
<keyword id="KW-0689">Ribosomal protein</keyword>
<keyword id="KW-0694">RNA-binding</keyword>
<keyword id="KW-0699">rRNA-binding</keyword>
<accession>B0U5L4</accession>
<name>RL6_XYLFM</name>
<reference key="1">
    <citation type="journal article" date="2010" name="J. Bacteriol.">
        <title>Whole genome sequences of two Xylella fastidiosa strains (M12 and M23) causing almond leaf scorch disease in California.</title>
        <authorList>
            <person name="Chen J."/>
            <person name="Xie G."/>
            <person name="Han S."/>
            <person name="Chertkov O."/>
            <person name="Sims D."/>
            <person name="Civerolo E.L."/>
        </authorList>
    </citation>
    <scope>NUCLEOTIDE SEQUENCE [LARGE SCALE GENOMIC DNA]</scope>
    <source>
        <strain>M12</strain>
    </source>
</reference>